<comment type="similarity">
    <text evidence="1">Belongs to the UPF0250 family.</text>
</comment>
<protein>
    <recommendedName>
        <fullName evidence="1">UPF0250 protein Ent638_1166</fullName>
    </recommendedName>
</protein>
<accession>A4W817</accession>
<organism>
    <name type="scientific">Enterobacter sp. (strain 638)</name>
    <dbReference type="NCBI Taxonomy" id="399742"/>
    <lineage>
        <taxon>Bacteria</taxon>
        <taxon>Pseudomonadati</taxon>
        <taxon>Pseudomonadota</taxon>
        <taxon>Gammaproteobacteria</taxon>
        <taxon>Enterobacterales</taxon>
        <taxon>Enterobacteriaceae</taxon>
        <taxon>Enterobacter</taxon>
    </lineage>
</organism>
<name>Y1166_ENT38</name>
<reference key="1">
    <citation type="journal article" date="2010" name="PLoS Genet.">
        <title>Genome sequence of the plant growth promoting endophytic bacterium Enterobacter sp. 638.</title>
        <authorList>
            <person name="Taghavi S."/>
            <person name="van der Lelie D."/>
            <person name="Hoffman A."/>
            <person name="Zhang Y.B."/>
            <person name="Walla M.D."/>
            <person name="Vangronsveld J."/>
            <person name="Newman L."/>
            <person name="Monchy S."/>
        </authorList>
    </citation>
    <scope>NUCLEOTIDE SEQUENCE [LARGE SCALE GENOMIC DNA]</scope>
    <source>
        <strain>638</strain>
    </source>
</reference>
<dbReference type="EMBL" id="CP000653">
    <property type="protein sequence ID" value="ABP59847.1"/>
    <property type="molecule type" value="Genomic_DNA"/>
</dbReference>
<dbReference type="RefSeq" id="WP_012016566.1">
    <property type="nucleotide sequence ID" value="NC_009436.1"/>
</dbReference>
<dbReference type="SMR" id="A4W817"/>
<dbReference type="STRING" id="399742.Ent638_1166"/>
<dbReference type="GeneID" id="93308248"/>
<dbReference type="KEGG" id="ent:Ent638_1166"/>
<dbReference type="eggNOG" id="COG2921">
    <property type="taxonomic scope" value="Bacteria"/>
</dbReference>
<dbReference type="HOGENOM" id="CLU_161438_2_1_6"/>
<dbReference type="OrthoDB" id="9793424at2"/>
<dbReference type="Proteomes" id="UP000000230">
    <property type="component" value="Chromosome"/>
</dbReference>
<dbReference type="GO" id="GO:0005829">
    <property type="term" value="C:cytosol"/>
    <property type="evidence" value="ECO:0007669"/>
    <property type="project" value="TreeGrafter"/>
</dbReference>
<dbReference type="FunFam" id="3.30.70.260:FF:000002">
    <property type="entry name" value="UPF0250 protein YbeD"/>
    <property type="match status" value="1"/>
</dbReference>
<dbReference type="Gene3D" id="3.30.70.260">
    <property type="match status" value="1"/>
</dbReference>
<dbReference type="HAMAP" id="MF_00659">
    <property type="entry name" value="UPF0250"/>
    <property type="match status" value="1"/>
</dbReference>
<dbReference type="InterPro" id="IPR007454">
    <property type="entry name" value="UPF0250_YbeD-like"/>
</dbReference>
<dbReference type="InterPro" id="IPR027471">
    <property type="entry name" value="YbeD-like_sf"/>
</dbReference>
<dbReference type="NCBIfam" id="NF003447">
    <property type="entry name" value="PRK04998.1"/>
    <property type="match status" value="1"/>
</dbReference>
<dbReference type="PANTHER" id="PTHR38036">
    <property type="entry name" value="UPF0250 PROTEIN YBED"/>
    <property type="match status" value="1"/>
</dbReference>
<dbReference type="PANTHER" id="PTHR38036:SF1">
    <property type="entry name" value="UPF0250 PROTEIN YBED"/>
    <property type="match status" value="1"/>
</dbReference>
<dbReference type="Pfam" id="PF04359">
    <property type="entry name" value="DUF493"/>
    <property type="match status" value="1"/>
</dbReference>
<dbReference type="SUPFAM" id="SSF117991">
    <property type="entry name" value="YbeD/HP0495-like"/>
    <property type="match status" value="1"/>
</dbReference>
<proteinExistence type="inferred from homology"/>
<feature type="chain" id="PRO_1000061866" description="UPF0250 protein Ent638_1166">
    <location>
        <begin position="1"/>
        <end position="87"/>
    </location>
</feature>
<sequence length="87" mass="9776">MKTKLNELLEFPTSFTYKVMGQALPELVDQVVEVVQRHAPGDYSPTVKPSSKGNYHSVSITITATHIEQVETLYEELGNIDIVRMVL</sequence>
<evidence type="ECO:0000255" key="1">
    <source>
        <dbReference type="HAMAP-Rule" id="MF_00659"/>
    </source>
</evidence>
<gene>
    <name type="ordered locus">Ent638_1166</name>
</gene>